<gene>
    <name evidence="1" type="primary">accA</name>
    <name type="ordered locus">SERP1263</name>
</gene>
<proteinExistence type="inferred from homology"/>
<evidence type="ECO:0000255" key="1">
    <source>
        <dbReference type="HAMAP-Rule" id="MF_00823"/>
    </source>
</evidence>
<evidence type="ECO:0000255" key="2">
    <source>
        <dbReference type="PROSITE-ProRule" id="PRU01137"/>
    </source>
</evidence>
<organism>
    <name type="scientific">Staphylococcus epidermidis (strain ATCC 35984 / DSM 28319 / BCRC 17069 / CCUG 31568 / BM 3577 / RP62A)</name>
    <dbReference type="NCBI Taxonomy" id="176279"/>
    <lineage>
        <taxon>Bacteria</taxon>
        <taxon>Bacillati</taxon>
        <taxon>Bacillota</taxon>
        <taxon>Bacilli</taxon>
        <taxon>Bacillales</taxon>
        <taxon>Staphylococcaceae</taxon>
        <taxon>Staphylococcus</taxon>
    </lineage>
</organism>
<feature type="chain" id="PRO_0000223833" description="Acetyl-coenzyme A carboxylase carboxyl transferase subunit alpha">
    <location>
        <begin position="1"/>
        <end position="314"/>
    </location>
</feature>
<feature type="domain" description="CoA carboxyltransferase C-terminal" evidence="2">
    <location>
        <begin position="32"/>
        <end position="289"/>
    </location>
</feature>
<comment type="function">
    <text evidence="1">Component of the acetyl coenzyme A carboxylase (ACC) complex. First, biotin carboxylase catalyzes the carboxylation of biotin on its carrier protein (BCCP) and then the CO(2) group is transferred by the carboxyltransferase to acetyl-CoA to form malonyl-CoA.</text>
</comment>
<comment type="catalytic activity">
    <reaction evidence="1">
        <text>N(6)-carboxybiotinyl-L-lysyl-[protein] + acetyl-CoA = N(6)-biotinyl-L-lysyl-[protein] + malonyl-CoA</text>
        <dbReference type="Rhea" id="RHEA:54728"/>
        <dbReference type="Rhea" id="RHEA-COMP:10505"/>
        <dbReference type="Rhea" id="RHEA-COMP:10506"/>
        <dbReference type="ChEBI" id="CHEBI:57288"/>
        <dbReference type="ChEBI" id="CHEBI:57384"/>
        <dbReference type="ChEBI" id="CHEBI:83144"/>
        <dbReference type="ChEBI" id="CHEBI:83145"/>
        <dbReference type="EC" id="2.1.3.15"/>
    </reaction>
</comment>
<comment type="pathway">
    <text evidence="1">Lipid metabolism; malonyl-CoA biosynthesis; malonyl-CoA from acetyl-CoA: step 1/1.</text>
</comment>
<comment type="subunit">
    <text evidence="1">Acetyl-CoA carboxylase is a heterohexamer composed of biotin carboxyl carrier protein (AccB), biotin carboxylase (AccC) and two subunits each of ACCase subunit alpha (AccA) and ACCase subunit beta (AccD).</text>
</comment>
<comment type="subcellular location">
    <subcellularLocation>
        <location evidence="1">Cytoplasm</location>
    </subcellularLocation>
</comment>
<comment type="similarity">
    <text evidence="1">Belongs to the AccA family.</text>
</comment>
<reference key="1">
    <citation type="journal article" date="2005" name="J. Bacteriol.">
        <title>Insights on evolution of virulence and resistance from the complete genome analysis of an early methicillin-resistant Staphylococcus aureus strain and a biofilm-producing methicillin-resistant Staphylococcus epidermidis strain.</title>
        <authorList>
            <person name="Gill S.R."/>
            <person name="Fouts D.E."/>
            <person name="Archer G.L."/>
            <person name="Mongodin E.F."/>
            <person name="DeBoy R.T."/>
            <person name="Ravel J."/>
            <person name="Paulsen I.T."/>
            <person name="Kolonay J.F."/>
            <person name="Brinkac L.M."/>
            <person name="Beanan M.J."/>
            <person name="Dodson R.J."/>
            <person name="Daugherty S.C."/>
            <person name="Madupu R."/>
            <person name="Angiuoli S.V."/>
            <person name="Durkin A.S."/>
            <person name="Haft D.H."/>
            <person name="Vamathevan J.J."/>
            <person name="Khouri H."/>
            <person name="Utterback T.R."/>
            <person name="Lee C."/>
            <person name="Dimitrov G."/>
            <person name="Jiang L."/>
            <person name="Qin H."/>
            <person name="Weidman J."/>
            <person name="Tran K."/>
            <person name="Kang K.H."/>
            <person name="Hance I.R."/>
            <person name="Nelson K.E."/>
            <person name="Fraser C.M."/>
        </authorList>
    </citation>
    <scope>NUCLEOTIDE SEQUENCE [LARGE SCALE GENOMIC DNA]</scope>
    <source>
        <strain>ATCC 35984 / DSM 28319 / BCRC 17069 / CCUG 31568 / BM 3577 / RP62A</strain>
    </source>
</reference>
<dbReference type="EC" id="2.1.3.15" evidence="1"/>
<dbReference type="EMBL" id="CP000029">
    <property type="protein sequence ID" value="AAW54635.1"/>
    <property type="molecule type" value="Genomic_DNA"/>
</dbReference>
<dbReference type="RefSeq" id="WP_002440194.1">
    <property type="nucleotide sequence ID" value="NC_002976.3"/>
</dbReference>
<dbReference type="SMR" id="Q5HNK5"/>
<dbReference type="STRING" id="176279.SERP1263"/>
<dbReference type="KEGG" id="ser:SERP1263"/>
<dbReference type="eggNOG" id="COG0825">
    <property type="taxonomic scope" value="Bacteria"/>
</dbReference>
<dbReference type="HOGENOM" id="CLU_015486_0_2_9"/>
<dbReference type="UniPathway" id="UPA00655">
    <property type="reaction ID" value="UER00711"/>
</dbReference>
<dbReference type="Proteomes" id="UP000000531">
    <property type="component" value="Chromosome"/>
</dbReference>
<dbReference type="GO" id="GO:0009317">
    <property type="term" value="C:acetyl-CoA carboxylase complex"/>
    <property type="evidence" value="ECO:0007669"/>
    <property type="project" value="InterPro"/>
</dbReference>
<dbReference type="GO" id="GO:0003989">
    <property type="term" value="F:acetyl-CoA carboxylase activity"/>
    <property type="evidence" value="ECO:0007669"/>
    <property type="project" value="InterPro"/>
</dbReference>
<dbReference type="GO" id="GO:0005524">
    <property type="term" value="F:ATP binding"/>
    <property type="evidence" value="ECO:0007669"/>
    <property type="project" value="UniProtKB-KW"/>
</dbReference>
<dbReference type="GO" id="GO:0016743">
    <property type="term" value="F:carboxyl- or carbamoyltransferase activity"/>
    <property type="evidence" value="ECO:0007669"/>
    <property type="project" value="UniProtKB-UniRule"/>
</dbReference>
<dbReference type="GO" id="GO:0006633">
    <property type="term" value="P:fatty acid biosynthetic process"/>
    <property type="evidence" value="ECO:0007669"/>
    <property type="project" value="UniProtKB-KW"/>
</dbReference>
<dbReference type="GO" id="GO:2001295">
    <property type="term" value="P:malonyl-CoA biosynthetic process"/>
    <property type="evidence" value="ECO:0007669"/>
    <property type="project" value="UniProtKB-UniRule"/>
</dbReference>
<dbReference type="Gene3D" id="3.90.226.10">
    <property type="entry name" value="2-enoyl-CoA Hydratase, Chain A, domain 1"/>
    <property type="match status" value="1"/>
</dbReference>
<dbReference type="HAMAP" id="MF_00823">
    <property type="entry name" value="AcetylCoA_CT_alpha"/>
    <property type="match status" value="1"/>
</dbReference>
<dbReference type="InterPro" id="IPR001095">
    <property type="entry name" value="Acetyl_CoA_COase_a_su"/>
</dbReference>
<dbReference type="InterPro" id="IPR029045">
    <property type="entry name" value="ClpP/crotonase-like_dom_sf"/>
</dbReference>
<dbReference type="InterPro" id="IPR011763">
    <property type="entry name" value="COA_CT_C"/>
</dbReference>
<dbReference type="NCBIfam" id="TIGR00513">
    <property type="entry name" value="accA"/>
    <property type="match status" value="1"/>
</dbReference>
<dbReference type="NCBIfam" id="NF041504">
    <property type="entry name" value="AccA_sub"/>
    <property type="match status" value="1"/>
</dbReference>
<dbReference type="NCBIfam" id="NF004344">
    <property type="entry name" value="PRK05724.1"/>
    <property type="match status" value="1"/>
</dbReference>
<dbReference type="PANTHER" id="PTHR42853">
    <property type="entry name" value="ACETYL-COENZYME A CARBOXYLASE CARBOXYL TRANSFERASE SUBUNIT ALPHA"/>
    <property type="match status" value="1"/>
</dbReference>
<dbReference type="PANTHER" id="PTHR42853:SF3">
    <property type="entry name" value="ACETYL-COENZYME A CARBOXYLASE CARBOXYL TRANSFERASE SUBUNIT ALPHA, CHLOROPLASTIC"/>
    <property type="match status" value="1"/>
</dbReference>
<dbReference type="Pfam" id="PF03255">
    <property type="entry name" value="ACCA"/>
    <property type="match status" value="1"/>
</dbReference>
<dbReference type="PRINTS" id="PR01069">
    <property type="entry name" value="ACCCTRFRASEA"/>
</dbReference>
<dbReference type="SUPFAM" id="SSF52096">
    <property type="entry name" value="ClpP/crotonase"/>
    <property type="match status" value="1"/>
</dbReference>
<dbReference type="PROSITE" id="PS50989">
    <property type="entry name" value="COA_CT_CTER"/>
    <property type="match status" value="1"/>
</dbReference>
<accession>Q5HNK5</accession>
<sequence>MLDFEKPLFEIRNKIDSLKESQEKNEVDLQDEIDMLEASLKRETTKVYTNLKPWDRVQIARLPERPTTLDYIPYIFDSFIELHGDRSFRDDPAMIGGIGYLDGKSVTVIGQQRGKDTKDNIYRNFGMAHPEGYRKALRLMKQAEKFNRPIFTFIDTKGAYPGKAAEERGQSESIAKNLMEMASLTVPVIAVVIGEGGSGGALGIGISNRVLMLENSTYSVISPEGAAALLWKDSNLAQIAAETMKITAHDLLDLGIIDEVINEPLGGAQKDEEAQALSIKKMFLKHLNELKQLTPEELANDRFEKFRKIGSVVE</sequence>
<protein>
    <recommendedName>
        <fullName evidence="1">Acetyl-coenzyme A carboxylase carboxyl transferase subunit alpha</fullName>
        <shortName evidence="1">ACCase subunit alpha</shortName>
        <shortName evidence="1">Acetyl-CoA carboxylase carboxyltransferase subunit alpha</shortName>
        <ecNumber evidence="1">2.1.3.15</ecNumber>
    </recommendedName>
</protein>
<name>ACCA_STAEQ</name>
<keyword id="KW-0067">ATP-binding</keyword>
<keyword id="KW-0963">Cytoplasm</keyword>
<keyword id="KW-0275">Fatty acid biosynthesis</keyword>
<keyword id="KW-0276">Fatty acid metabolism</keyword>
<keyword id="KW-0444">Lipid biosynthesis</keyword>
<keyword id="KW-0443">Lipid metabolism</keyword>
<keyword id="KW-0547">Nucleotide-binding</keyword>
<keyword id="KW-1185">Reference proteome</keyword>
<keyword id="KW-0808">Transferase</keyword>